<gene>
    <name evidence="1" type="primary">TIC214</name>
    <name type="synonym">ycf1</name>
</gene>
<accession>P12222</accession>
<accession>P12220</accession>
<accession>P12224</accession>
<accession>Q32721</accession>
<accession>Q3HKA6</accession>
<geneLocation type="chloroplast"/>
<dbReference type="EMBL" id="Z00044">
    <property type="protein sequence ID" value="CAA77394.1"/>
    <property type="status" value="ALT_SEQ"/>
    <property type="molecule type" value="Genomic_DNA"/>
</dbReference>
<dbReference type="EMBL" id="Z00044">
    <property type="protein sequence ID" value="CAJ32485.1"/>
    <property type="molecule type" value="Genomic_DNA"/>
</dbReference>
<dbReference type="PIR" id="A05036">
    <property type="entry name" value="A05036"/>
</dbReference>
<dbReference type="PIR" id="A05217">
    <property type="entry name" value="A05217"/>
</dbReference>
<dbReference type="PIR" id="A05218">
    <property type="entry name" value="A05218"/>
</dbReference>
<dbReference type="RefSeq" id="NP_054553.1">
    <property type="nucleotide sequence ID" value="NC_001879.2"/>
</dbReference>
<dbReference type="KEGG" id="nta:1466307"/>
<dbReference type="OMA" id="NREMHIK"/>
<dbReference type="OrthoDB" id="1618367at2759"/>
<dbReference type="Proteomes" id="UP000084051">
    <property type="component" value="Unplaced"/>
</dbReference>
<dbReference type="GO" id="GO:0009706">
    <property type="term" value="C:chloroplast inner membrane"/>
    <property type="evidence" value="ECO:0007669"/>
    <property type="project" value="UniProtKB-SubCell"/>
</dbReference>
<dbReference type="GO" id="GO:0015031">
    <property type="term" value="P:protein transport"/>
    <property type="evidence" value="ECO:0007669"/>
    <property type="project" value="UniProtKB-KW"/>
</dbReference>
<dbReference type="InterPro" id="IPR008896">
    <property type="entry name" value="TIC214"/>
</dbReference>
<dbReference type="PANTHER" id="PTHR33163:SF40">
    <property type="entry name" value="PROTEIN TIC 214"/>
    <property type="match status" value="1"/>
</dbReference>
<dbReference type="PANTHER" id="PTHR33163">
    <property type="entry name" value="PROTEIN TIC 214-RELATED"/>
    <property type="match status" value="1"/>
</dbReference>
<dbReference type="Pfam" id="PF05758">
    <property type="entry name" value="Ycf1"/>
    <property type="match status" value="1"/>
</dbReference>
<feature type="chain" id="PRO_0000217307" description="Protein TIC 214">
    <location>
        <begin position="1"/>
        <end position="1901"/>
    </location>
</feature>
<feature type="transmembrane region" description="Helical" evidence="2">
    <location>
        <begin position="18"/>
        <end position="38"/>
    </location>
</feature>
<feature type="transmembrane region" description="Helical" evidence="2">
    <location>
        <begin position="64"/>
        <end position="84"/>
    </location>
</feature>
<feature type="transmembrane region" description="Helical" evidence="2">
    <location>
        <begin position="87"/>
        <end position="107"/>
    </location>
</feature>
<feature type="transmembrane region" description="Helical" evidence="2">
    <location>
        <begin position="124"/>
        <end position="144"/>
    </location>
</feature>
<feature type="transmembrane region" description="Helical" evidence="2">
    <location>
        <begin position="172"/>
        <end position="192"/>
    </location>
</feature>
<feature type="transmembrane region" description="Helical" evidence="2">
    <location>
        <begin position="221"/>
        <end position="241"/>
    </location>
</feature>
<feature type="region of interest" description="Disordered" evidence="3">
    <location>
        <begin position="248"/>
        <end position="299"/>
    </location>
</feature>
<feature type="region of interest" description="Disordered" evidence="3">
    <location>
        <begin position="797"/>
        <end position="817"/>
    </location>
</feature>
<feature type="region of interest" description="Disordered" evidence="3">
    <location>
        <begin position="1591"/>
        <end position="1618"/>
    </location>
</feature>
<feature type="compositionally biased region" description="Acidic residues" evidence="3">
    <location>
        <begin position="256"/>
        <end position="268"/>
    </location>
</feature>
<feature type="compositionally biased region" description="Basic and acidic residues" evidence="3">
    <location>
        <begin position="1591"/>
        <end position="1611"/>
    </location>
</feature>
<organism>
    <name type="scientific">Nicotiana tabacum</name>
    <name type="common">Common tobacco</name>
    <dbReference type="NCBI Taxonomy" id="4097"/>
    <lineage>
        <taxon>Eukaryota</taxon>
        <taxon>Viridiplantae</taxon>
        <taxon>Streptophyta</taxon>
        <taxon>Embryophyta</taxon>
        <taxon>Tracheophyta</taxon>
        <taxon>Spermatophyta</taxon>
        <taxon>Magnoliopsida</taxon>
        <taxon>eudicotyledons</taxon>
        <taxon>Gunneridae</taxon>
        <taxon>Pentapetalae</taxon>
        <taxon>asterids</taxon>
        <taxon>lamiids</taxon>
        <taxon>Solanales</taxon>
        <taxon>Solanaceae</taxon>
        <taxon>Nicotianoideae</taxon>
        <taxon>Nicotianeae</taxon>
        <taxon>Nicotiana</taxon>
    </lineage>
</organism>
<proteinExistence type="inferred from homology"/>
<sequence>MIFQSFLLGNLVSLCMKIINSVVVVGLYYGFLTTFSIGPSYLFLLRALVMEEGTEKKVSATTGFITGQLMMFISIYYAPLHLALGRPHTITVLALPYLLFHFFWNNHKHFFDYGSTTRNSMRNLSIQCVFLNNLIFQLFNHFILPSSMLARLVNIYLFRCNSKILFVTSGFVGWLIGHILFMKWLGLVLVWIRQNHSIRSNKYIRSNKYLVLELRNSMARIFSILLFITCVYYLGRIPSPILTKKLKEASKTEERVESEEERDVEIETASEMKGTKQEQEGSTEEDPYPSPSLFSEERWDPDKIDETEEIRVNGKDKIKDKFHSHLTETGYNNINTSNSPIYDYEDSYLNNNNTGNTEIFKLQLLDKKNENKDLFWFQQPLVSLLFDYNRWNRPFRYIKNNRFEQAIRTEMSQYFFNTCKSDGKQRISFTYPPSLSTFWKMIKRRIPLLSLQKTLPNELDNQWISTNKEKSNNLNKEFLNRLEVLDKESFSLDILETRTRLCNDDTKKEYVPKMYDPLLNGPYRGTIKKKFSPSIINNTSLENLKERVRINRIHTIFLPNTDYQELEQKVDTVAKKPLSTEIDEFLTLINEFGNEPKSSLNLKDLSLFSDQEQGRVNSEKRTKFVKFVFNAIAPNGTTSEKKSIGIKEISKKIPRWSHKLITELEQQSGDYQEGVPLDHQIRSRKAKRVVIFTANNQNNDPDTKDTDTADQDQTKEVALIRYSQQPDFRRGIIKGSMRAQRRKTVIWKLFQANVHSPLFLDRITPPFLFSFDISGLIKPIFRNWSGKEGEFKILESREEQTKREEKKEKDKKGENKRKEKARIEIAEAWDTIPFAQIIRGYMLITQSILRKYIVLPSLIIAKNLGRMLVLQLPEWSEDLQEWNREMHIKCTYNGVQLSETEFPKNWLKDGIQIKILFPFCLKPWHISKLYSSRGELMKKKKQKDDFCFLTVWGMEAELPFGSPRKRPSFFEPIFKELEKKIGKFKKKYFITLKVFKGKIKLFRRISKETKKWLIKSSLFIKKMKKELSKVNPIVLFRLKEIDESNETKKEKDSLMSNQIINESFSQIESGNWPNSSLIESKMKDLTDRTSTIKNQIERITKEKKKVTPEIDISPNKTNNIKKFESPKKIFQILKRRNTRLIWKFHYFLKLFIQRLYIDLFLSIINIPRINTQLFLESTNKLIDKYISNNEINQEKINNQKKIHFISTIKKSLYNISKKNSHIFFDLSYLSQAYVFYKLSQPQVINLSKLRSVLQYNRTSFFLKTKIKDYFRTLGIFHSELKHKKLQSYRINQWKNWLRRHYQYDLSQIRWSRLMPQKWRNRVNQGCMAQNRNLNKWNSYEKDQLIHYKKENDSELYSLANQKDNFQKCYRYDLLAYKSINYEKKNDSFISRLPFQVNKNLEISSNSNTSKHNLFDMLGNLHINNYLRKGNILYIERNLDRKYFDWKIIHFSLRQKEDIEAWVKIDTNSNPNTKIGINNYQIIDKIDKKGFFYLTIHQNPENNQKNSKKAFFDWMGMNEKILNRPILNLEFWFFPEFVPLYNVYKIKPWIIPSKLLLLNLNTNENVSQNKNINKNQKQNFFLRSNKKIKNRIQEAKEPASQGEKERGSDIENKGNLGPVLSKHQNALKKDYAESDTKKGKKKKQYKSNTEAELDLFLKRYLLFQLRWNDALNQRMIENIKVYCLLLRLINPSKIAISSIQRREMSLDIMLIQKNLTLTELMKKGILIIEPIRLSVKNNGQFIMYQTIGISLVHKSKHQTNQRYPEQRYVDKKNFDEFILQPQTQRINTDKNHFDLLVPENILWSRRRRELRIRSLFNSLNWNGIDRNSVFCNENNVKNWSQFLDERKPLYKEKNELIKLKFFLWPNYRLEDLACMNRYWFDTNNGSRFSILRIHMYPQLKIN</sequence>
<reference key="1">
    <citation type="journal article" date="1986" name="EMBO J.">
        <title>The complete nucleotide sequence of the tobacco chloroplast genome: its gene organization and expression.</title>
        <authorList>
            <person name="Shinozaki K."/>
            <person name="Ohme M."/>
            <person name="Tanaka M."/>
            <person name="Wakasugi T."/>
            <person name="Hayashida N."/>
            <person name="Matsubayashi T."/>
            <person name="Zaita N."/>
            <person name="Chunwongse J."/>
            <person name="Obokata J."/>
            <person name="Yamaguchi-Shinozaki K."/>
            <person name="Ohto C."/>
            <person name="Torazawa K."/>
            <person name="Meng B.-Y."/>
            <person name="Sugita M."/>
            <person name="Deno H."/>
            <person name="Kamogashira T."/>
            <person name="Yamada K."/>
            <person name="Kusuda J."/>
            <person name="Takaiwa F."/>
            <person name="Kato A."/>
            <person name="Tohdoh N."/>
            <person name="Shimada H."/>
            <person name="Sugiura M."/>
        </authorList>
    </citation>
    <scope>NUCLEOTIDE SEQUENCE [LARGE SCALE GENOMIC DNA]</scope>
    <source>
        <strain>cv. Bright Yellow 4</strain>
    </source>
</reference>
<reference key="2">
    <citation type="journal article" date="1992" name="J. Mol. Biol.">
        <title>Small single-copy region of plastid DNA in the non-photosynthetic angiosperm Epifagus virginiana contains only two genes. Differences among dicots, monocots and bryophytes in gene organization at a non-bioenergetic locus.</title>
        <authorList>
            <person name="Wolfe K.H."/>
            <person name="Morden C.W."/>
            <person name="Palmer J.D."/>
        </authorList>
    </citation>
    <scope>SEQUENCE REVISION</scope>
</reference>
<reference key="3">
    <citation type="journal article" date="1998" name="Plant Mol. Biol. Rep.">
        <title>Updated gene map of tobacco chloroplast DNA.</title>
        <authorList>
            <person name="Wakasugi T."/>
            <person name="Sugita M."/>
            <person name="Tsudzuki T."/>
            <person name="Sugiura M."/>
        </authorList>
    </citation>
    <scope>SEQUENCE REVISION</scope>
    <source>
        <strain>cv. Bright Yellow 4</strain>
    </source>
</reference>
<reference key="4">
    <citation type="journal article" date="2000" name="Plant J.">
        <title>The two largest chloroplast genome-encoded open reading frames of higher plants are essential genes.</title>
        <authorList>
            <person name="Drescher A."/>
            <person name="Ruf S."/>
            <person name="Calsa T. Jr."/>
            <person name="Carrer H."/>
            <person name="Bock R."/>
        </authorList>
    </citation>
    <scope>ESSENTIAL FOR GROWTH</scope>
    <source>
        <strain>cv. Petit Havana</strain>
    </source>
</reference>
<protein>
    <recommendedName>
        <fullName evidence="1">Protein TIC 214</fullName>
    </recommendedName>
    <alternativeName>
        <fullName evidence="1">Translocon at the inner envelope membrane of chloroplasts 214</fullName>
        <shortName evidence="1">AtTIC214</shortName>
    </alternativeName>
</protein>
<name>TI214_TOBAC</name>
<keyword id="KW-0150">Chloroplast</keyword>
<keyword id="KW-0472">Membrane</keyword>
<keyword id="KW-0934">Plastid</keyword>
<keyword id="KW-1001">Plastid inner membrane</keyword>
<keyword id="KW-0653">Protein transport</keyword>
<keyword id="KW-1185">Reference proteome</keyword>
<keyword id="KW-0812">Transmembrane</keyword>
<keyword id="KW-1133">Transmembrane helix</keyword>
<keyword id="KW-0813">Transport</keyword>
<evidence type="ECO:0000250" key="1">
    <source>
        <dbReference type="UniProtKB" id="P56785"/>
    </source>
</evidence>
<evidence type="ECO:0000255" key="2"/>
<evidence type="ECO:0000256" key="3">
    <source>
        <dbReference type="SAM" id="MobiDB-lite"/>
    </source>
</evidence>
<evidence type="ECO:0000305" key="4"/>
<comment type="function">
    <text evidence="1">Involved in protein precursor import into chloroplasts. May be part of an intermediate translocation complex acting as a protein-conducting channel at the inner envelope.</text>
</comment>
<comment type="subunit">
    <text evidence="1">Part of the Tic complex.</text>
</comment>
<comment type="subcellular location">
    <subcellularLocation>
        <location evidence="1">Plastid</location>
        <location evidence="1">Chloroplast inner membrane</location>
        <topology evidence="2">Multi-pass membrane protein</topology>
    </subcellularLocation>
</comment>
<comment type="similarity">
    <text evidence="4">Belongs to the TIC214 family.</text>
</comment>
<comment type="sequence caution" evidence="4">
    <conflict type="erroneous gene model prediction">
        <sequence resource="EMBL-CDS" id="CAA77394"/>
    </conflict>
</comment>